<dbReference type="EC" id="3.4.21.-"/>
<dbReference type="EMBL" id="AY862979">
    <property type="protein sequence ID" value="AAW57541.1"/>
    <property type="molecule type" value="Genomic_DNA"/>
</dbReference>
<dbReference type="EMBL" id="AY862895">
    <property type="protein sequence ID" value="AAW57541.1"/>
    <property type="status" value="JOINED"/>
    <property type="molecule type" value="Genomic_DNA"/>
</dbReference>
<dbReference type="EMBL" id="AY862902">
    <property type="protein sequence ID" value="AAW57541.1"/>
    <property type="status" value="JOINED"/>
    <property type="molecule type" value="Genomic_DNA"/>
</dbReference>
<dbReference type="EMBL" id="AY862909">
    <property type="protein sequence ID" value="AAW57541.1"/>
    <property type="status" value="JOINED"/>
    <property type="molecule type" value="Genomic_DNA"/>
</dbReference>
<dbReference type="EMBL" id="AY862916">
    <property type="protein sequence ID" value="AAW57541.1"/>
    <property type="status" value="JOINED"/>
    <property type="molecule type" value="Genomic_DNA"/>
</dbReference>
<dbReference type="EMBL" id="AY862923">
    <property type="protein sequence ID" value="AAW57541.1"/>
    <property type="status" value="JOINED"/>
    <property type="molecule type" value="Genomic_DNA"/>
</dbReference>
<dbReference type="EMBL" id="AY862930">
    <property type="protein sequence ID" value="AAW57541.1"/>
    <property type="status" value="JOINED"/>
    <property type="molecule type" value="Genomic_DNA"/>
</dbReference>
<dbReference type="EMBL" id="AY862937">
    <property type="protein sequence ID" value="AAW57541.1"/>
    <property type="status" value="JOINED"/>
    <property type="molecule type" value="Genomic_DNA"/>
</dbReference>
<dbReference type="EMBL" id="AY862944">
    <property type="protein sequence ID" value="AAW57541.1"/>
    <property type="status" value="JOINED"/>
    <property type="molecule type" value="Genomic_DNA"/>
</dbReference>
<dbReference type="EMBL" id="AY862951">
    <property type="protein sequence ID" value="AAW57541.1"/>
    <property type="status" value="JOINED"/>
    <property type="molecule type" value="Genomic_DNA"/>
</dbReference>
<dbReference type="EMBL" id="AY862958">
    <property type="protein sequence ID" value="AAW57541.1"/>
    <property type="status" value="JOINED"/>
    <property type="molecule type" value="Genomic_DNA"/>
</dbReference>
<dbReference type="EMBL" id="AY862965">
    <property type="protein sequence ID" value="AAW57541.1"/>
    <property type="status" value="JOINED"/>
    <property type="molecule type" value="Genomic_DNA"/>
</dbReference>
<dbReference type="EMBL" id="AY862972">
    <property type="protein sequence ID" value="AAW57541.1"/>
    <property type="status" value="JOINED"/>
    <property type="molecule type" value="Genomic_DNA"/>
</dbReference>
<dbReference type="FunCoup" id="Q5G268">
    <property type="interactions" value="46"/>
</dbReference>
<dbReference type="STRING" id="61853.ENSNLEP00000010821"/>
<dbReference type="MEROPS" id="S01.237"/>
<dbReference type="GlyCosmos" id="Q5G268">
    <property type="glycosylation" value="2 sites, No reported glycans"/>
</dbReference>
<dbReference type="eggNOG" id="KOG3627">
    <property type="taxonomic scope" value="Eukaryota"/>
</dbReference>
<dbReference type="InParanoid" id="Q5G268"/>
<dbReference type="Proteomes" id="UP000001073">
    <property type="component" value="Unplaced"/>
</dbReference>
<dbReference type="GO" id="GO:0030424">
    <property type="term" value="C:axon"/>
    <property type="evidence" value="ECO:0000250"/>
    <property type="project" value="UniProtKB"/>
</dbReference>
<dbReference type="GO" id="GO:0005576">
    <property type="term" value="C:extracellular region"/>
    <property type="evidence" value="ECO:0007669"/>
    <property type="project" value="UniProtKB-SubCell"/>
</dbReference>
<dbReference type="GO" id="GO:0005886">
    <property type="term" value="C:plasma membrane"/>
    <property type="evidence" value="ECO:0000250"/>
    <property type="project" value="UniProtKB"/>
</dbReference>
<dbReference type="GO" id="GO:0004252">
    <property type="term" value="F:serine-type endopeptidase activity"/>
    <property type="evidence" value="ECO:0007669"/>
    <property type="project" value="InterPro"/>
</dbReference>
<dbReference type="GO" id="GO:0006887">
    <property type="term" value="P:exocytosis"/>
    <property type="evidence" value="ECO:0000250"/>
    <property type="project" value="UniProtKB"/>
</dbReference>
<dbReference type="GO" id="GO:0006508">
    <property type="term" value="P:proteolysis"/>
    <property type="evidence" value="ECO:0007669"/>
    <property type="project" value="UniProtKB-KW"/>
</dbReference>
<dbReference type="CDD" id="cd00190">
    <property type="entry name" value="Tryp_SPc"/>
    <property type="match status" value="1"/>
</dbReference>
<dbReference type="FunFam" id="2.40.10.10:FF:000053">
    <property type="entry name" value="Neurotrypsin"/>
    <property type="match status" value="1"/>
</dbReference>
<dbReference type="FunFam" id="2.40.20.10:FF:000010">
    <property type="entry name" value="Neurotrypsin"/>
    <property type="match status" value="1"/>
</dbReference>
<dbReference type="FunFam" id="3.10.250.10:FF:000019">
    <property type="entry name" value="Neurotrypsin"/>
    <property type="match status" value="1"/>
</dbReference>
<dbReference type="FunFam" id="3.10.250.10:FF:000005">
    <property type="entry name" value="Neurotrypsin isoform A"/>
    <property type="match status" value="2"/>
</dbReference>
<dbReference type="FunFam" id="3.10.250.10:FF:000006">
    <property type="entry name" value="neurotrypsin isoform X2"/>
    <property type="match status" value="1"/>
</dbReference>
<dbReference type="Gene3D" id="2.40.20.10">
    <property type="entry name" value="Plasminogen Kringle 4"/>
    <property type="match status" value="1"/>
</dbReference>
<dbReference type="Gene3D" id="3.10.250.10">
    <property type="entry name" value="SRCR-like domain"/>
    <property type="match status" value="4"/>
</dbReference>
<dbReference type="Gene3D" id="2.40.10.10">
    <property type="entry name" value="Trypsin-like serine proteases"/>
    <property type="match status" value="1"/>
</dbReference>
<dbReference type="InterPro" id="IPR000001">
    <property type="entry name" value="Kringle"/>
</dbReference>
<dbReference type="InterPro" id="IPR013806">
    <property type="entry name" value="Kringle-like"/>
</dbReference>
<dbReference type="InterPro" id="IPR018056">
    <property type="entry name" value="Kringle_CS"/>
</dbReference>
<dbReference type="InterPro" id="IPR038178">
    <property type="entry name" value="Kringle_sf"/>
</dbReference>
<dbReference type="InterPro" id="IPR009003">
    <property type="entry name" value="Peptidase_S1_PA"/>
</dbReference>
<dbReference type="InterPro" id="IPR043504">
    <property type="entry name" value="Peptidase_S1_PA_chymotrypsin"/>
</dbReference>
<dbReference type="InterPro" id="IPR001314">
    <property type="entry name" value="Peptidase_S1A"/>
</dbReference>
<dbReference type="InterPro" id="IPR001190">
    <property type="entry name" value="SRCR"/>
</dbReference>
<dbReference type="InterPro" id="IPR036772">
    <property type="entry name" value="SRCR-like_dom_sf"/>
</dbReference>
<dbReference type="InterPro" id="IPR001254">
    <property type="entry name" value="Trypsin_dom"/>
</dbReference>
<dbReference type="InterPro" id="IPR018114">
    <property type="entry name" value="TRYPSIN_HIS"/>
</dbReference>
<dbReference type="InterPro" id="IPR033116">
    <property type="entry name" value="TRYPSIN_SER"/>
</dbReference>
<dbReference type="PANTHER" id="PTHR48071:SF18">
    <property type="entry name" value="DELETED IN MALIGNANT BRAIN TUMORS 1 PROTEIN-RELATED"/>
    <property type="match status" value="1"/>
</dbReference>
<dbReference type="PANTHER" id="PTHR48071">
    <property type="entry name" value="SRCR DOMAIN-CONTAINING PROTEIN"/>
    <property type="match status" value="1"/>
</dbReference>
<dbReference type="Pfam" id="PF00051">
    <property type="entry name" value="Kringle"/>
    <property type="match status" value="1"/>
</dbReference>
<dbReference type="Pfam" id="PF00530">
    <property type="entry name" value="SRCR"/>
    <property type="match status" value="4"/>
</dbReference>
<dbReference type="Pfam" id="PF00089">
    <property type="entry name" value="Trypsin"/>
    <property type="match status" value="1"/>
</dbReference>
<dbReference type="PRINTS" id="PR00722">
    <property type="entry name" value="CHYMOTRYPSIN"/>
</dbReference>
<dbReference type="PRINTS" id="PR00258">
    <property type="entry name" value="SPERACTRCPTR"/>
</dbReference>
<dbReference type="SMART" id="SM00130">
    <property type="entry name" value="KR"/>
    <property type="match status" value="1"/>
</dbReference>
<dbReference type="SMART" id="SM00202">
    <property type="entry name" value="SR"/>
    <property type="match status" value="4"/>
</dbReference>
<dbReference type="SMART" id="SM00020">
    <property type="entry name" value="Tryp_SPc"/>
    <property type="match status" value="1"/>
</dbReference>
<dbReference type="SUPFAM" id="SSF57440">
    <property type="entry name" value="Kringle-like"/>
    <property type="match status" value="1"/>
</dbReference>
<dbReference type="SUPFAM" id="SSF56487">
    <property type="entry name" value="SRCR-like"/>
    <property type="match status" value="4"/>
</dbReference>
<dbReference type="SUPFAM" id="SSF50494">
    <property type="entry name" value="Trypsin-like serine proteases"/>
    <property type="match status" value="1"/>
</dbReference>
<dbReference type="PROSITE" id="PS00021">
    <property type="entry name" value="KRINGLE_1"/>
    <property type="match status" value="1"/>
</dbReference>
<dbReference type="PROSITE" id="PS50070">
    <property type="entry name" value="KRINGLE_2"/>
    <property type="match status" value="1"/>
</dbReference>
<dbReference type="PROSITE" id="PS00420">
    <property type="entry name" value="SRCR_1"/>
    <property type="match status" value="3"/>
</dbReference>
<dbReference type="PROSITE" id="PS50287">
    <property type="entry name" value="SRCR_2"/>
    <property type="match status" value="4"/>
</dbReference>
<dbReference type="PROSITE" id="PS50240">
    <property type="entry name" value="TRYPSIN_DOM"/>
    <property type="match status" value="1"/>
</dbReference>
<dbReference type="PROSITE" id="PS00134">
    <property type="entry name" value="TRYPSIN_HIS"/>
    <property type="match status" value="1"/>
</dbReference>
<dbReference type="PROSITE" id="PS00135">
    <property type="entry name" value="TRYPSIN_SER"/>
    <property type="match status" value="1"/>
</dbReference>
<organism>
    <name type="scientific">Nomascus leucogenys</name>
    <name type="common">Northern white-cheeked gibbon</name>
    <name type="synonym">Hylobates leucogenys</name>
    <dbReference type="NCBI Taxonomy" id="61853"/>
    <lineage>
        <taxon>Eukaryota</taxon>
        <taxon>Metazoa</taxon>
        <taxon>Chordata</taxon>
        <taxon>Craniata</taxon>
        <taxon>Vertebrata</taxon>
        <taxon>Euteleostomi</taxon>
        <taxon>Mammalia</taxon>
        <taxon>Eutheria</taxon>
        <taxon>Euarchontoglires</taxon>
        <taxon>Primates</taxon>
        <taxon>Haplorrhini</taxon>
        <taxon>Catarrhini</taxon>
        <taxon>Hylobatidae</taxon>
        <taxon>Nomascus</taxon>
    </lineage>
</organism>
<accession>Q5G268</accession>
<evidence type="ECO:0000250" key="1"/>
<evidence type="ECO:0000255" key="2"/>
<evidence type="ECO:0000255" key="3">
    <source>
        <dbReference type="PROSITE-ProRule" id="PRU00121"/>
    </source>
</evidence>
<evidence type="ECO:0000255" key="4">
    <source>
        <dbReference type="PROSITE-ProRule" id="PRU00196"/>
    </source>
</evidence>
<evidence type="ECO:0000255" key="5">
    <source>
        <dbReference type="PROSITE-ProRule" id="PRU00274"/>
    </source>
</evidence>
<evidence type="ECO:0000256" key="6">
    <source>
        <dbReference type="SAM" id="MobiDB-lite"/>
    </source>
</evidence>
<reference key="1">
    <citation type="journal article" date="2005" name="Cytogenet. Genome Res.">
        <title>Genetic evidence of a strong functional constraint of neurotrypsin during primate evolution.</title>
        <authorList>
            <person name="Xu H.L."/>
            <person name="Su B."/>
        </authorList>
    </citation>
    <scope>NUCLEOTIDE SEQUENCE [GENOMIC DNA]</scope>
</reference>
<keyword id="KW-1015">Disulfide bond</keyword>
<keyword id="KW-0325">Glycoprotein</keyword>
<keyword id="KW-0378">Hydrolase</keyword>
<keyword id="KW-0420">Kringle</keyword>
<keyword id="KW-0645">Protease</keyword>
<keyword id="KW-1185">Reference proteome</keyword>
<keyword id="KW-0677">Repeat</keyword>
<keyword id="KW-0964">Secreted</keyword>
<keyword id="KW-0720">Serine protease</keyword>
<keyword id="KW-0732">Signal</keyword>
<protein>
    <recommendedName>
        <fullName>Neurotrypsin</fullName>
        <ecNumber>3.4.21.-</ecNumber>
    </recommendedName>
    <alternativeName>
        <fullName>Serine protease 12</fullName>
    </alternativeName>
</protein>
<name>NETR_NOMLE</name>
<feature type="signal peptide" evidence="2">
    <location>
        <begin position="1"/>
        <end position="20"/>
    </location>
</feature>
<feature type="chain" id="PRO_0000027664" description="Neurotrypsin">
    <location>
        <begin position="21"/>
        <end position="875"/>
    </location>
</feature>
<feature type="domain" description="Kringle" evidence="3">
    <location>
        <begin position="93"/>
        <end position="165"/>
    </location>
</feature>
<feature type="domain" description="SRCR 1" evidence="4">
    <location>
        <begin position="170"/>
        <end position="271"/>
    </location>
</feature>
<feature type="domain" description="SRCR 2" evidence="4">
    <location>
        <begin position="280"/>
        <end position="381"/>
    </location>
</feature>
<feature type="domain" description="SRCR 3" evidence="4">
    <location>
        <begin position="387"/>
        <end position="487"/>
    </location>
</feature>
<feature type="domain" description="SRCR 4" evidence="4">
    <location>
        <begin position="500"/>
        <end position="601"/>
    </location>
</feature>
<feature type="domain" description="Peptidase S1" evidence="5">
    <location>
        <begin position="631"/>
        <end position="874"/>
    </location>
</feature>
<feature type="region of interest" description="Disordered" evidence="6">
    <location>
        <begin position="31"/>
        <end position="88"/>
    </location>
</feature>
<feature type="region of interest" description="Zymogen activation region">
    <location>
        <begin position="619"/>
        <end position="630"/>
    </location>
</feature>
<feature type="compositionally biased region" description="Pro residues" evidence="6">
    <location>
        <begin position="56"/>
        <end position="71"/>
    </location>
</feature>
<feature type="active site" description="Charge relay system" evidence="1">
    <location>
        <position position="676"/>
    </location>
</feature>
<feature type="active site" description="Charge relay system" evidence="1">
    <location>
        <position position="726"/>
    </location>
</feature>
<feature type="active site" description="Charge relay system" evidence="1">
    <location>
        <position position="825"/>
    </location>
</feature>
<feature type="site" description="Reactive bond homolog" evidence="2">
    <location>
        <begin position="630"/>
        <end position="631"/>
    </location>
</feature>
<feature type="glycosylation site" description="N-linked (GlcNAc...) asparagine" evidence="2">
    <location>
        <position position="26"/>
    </location>
</feature>
<feature type="glycosylation site" description="N-linked (GlcNAc...) asparagine" evidence="2">
    <location>
        <position position="683"/>
    </location>
</feature>
<feature type="disulfide bond" evidence="1">
    <location>
        <begin position="93"/>
        <end position="165"/>
    </location>
</feature>
<feature type="disulfide bond" evidence="1">
    <location>
        <begin position="109"/>
        <end position="149"/>
    </location>
</feature>
<feature type="disulfide bond" evidence="1">
    <location>
        <begin position="138"/>
        <end position="163"/>
    </location>
</feature>
<feature type="disulfide bond" evidence="1">
    <location>
        <begin position="195"/>
        <end position="259"/>
    </location>
</feature>
<feature type="disulfide bond" evidence="1">
    <location>
        <begin position="208"/>
        <end position="269"/>
    </location>
</feature>
<feature type="disulfide bond" evidence="1">
    <location>
        <begin position="239"/>
        <end position="249"/>
    </location>
</feature>
<feature type="disulfide bond" evidence="1">
    <location>
        <begin position="305"/>
        <end position="369"/>
    </location>
</feature>
<feature type="disulfide bond" evidence="1">
    <location>
        <begin position="318"/>
        <end position="379"/>
    </location>
</feature>
<feature type="disulfide bond" evidence="1">
    <location>
        <begin position="349"/>
        <end position="359"/>
    </location>
</feature>
<feature type="disulfide bond" evidence="1">
    <location>
        <begin position="412"/>
        <end position="475"/>
    </location>
</feature>
<feature type="disulfide bond" evidence="1">
    <location>
        <begin position="425"/>
        <end position="485"/>
    </location>
</feature>
<feature type="disulfide bond" evidence="1">
    <location>
        <begin position="455"/>
        <end position="465"/>
    </location>
</feature>
<feature type="disulfide bond" evidence="1">
    <location>
        <begin position="525"/>
        <end position="589"/>
    </location>
</feature>
<feature type="disulfide bond" evidence="1">
    <location>
        <begin position="538"/>
        <end position="599"/>
    </location>
</feature>
<feature type="disulfide bond" evidence="1">
    <location>
        <begin position="569"/>
        <end position="579"/>
    </location>
</feature>
<feature type="disulfide bond" evidence="2">
    <location>
        <begin position="619"/>
        <end position="750"/>
    </location>
</feature>
<feature type="disulfide bond" evidence="1">
    <location>
        <begin position="661"/>
        <end position="677"/>
    </location>
</feature>
<feature type="disulfide bond" evidence="1">
    <location>
        <begin position="765"/>
        <end position="831"/>
    </location>
</feature>
<feature type="disulfide bond" evidence="1">
    <location>
        <begin position="794"/>
        <end position="808"/>
    </location>
</feature>
<feature type="disulfide bond" evidence="1">
    <location>
        <begin position="821"/>
        <end position="850"/>
    </location>
</feature>
<sequence>MTLARFVLALVLGALPEVVXFDSVLNDSLHHRPRHSPPTGPHYPYYLPTQQRPPRTRPPPPLPRFPRPPRALPAQRPHALQAGHTPRPHPWGCPAGEPWVSVTDFGAPCLRWAEVPPFLERSPPANWAQLRGQRHNFCRSPDGAGRPWCFYGDARGKVDWGYCDCRHGSIRLRGGKNEFEGTVEVYASGVWGTVCSSHWDDSDASVICHQLQLGGKGIAKQTPFSGLGLIPIYWSNVRCRGDEENILLCEKDIWQGGVCPQKMAAAVTCSFSHGPTFPIIRLVGGSSVHEGRVELYHAGQWGTVCDDQWDDADAEVICRQLGLSGIAKAWHQAYFGEGSGPVMLDEVRCTGNELSIEQCPKSSWGEHNCGHKEDAGVSCTPLTDGVIRLAGGKGSHEGRLEVYYRGQWGTVCDDGWTELNTYVVCRQLGFKYGKQASANHFEESTGPIWLDDVSCSGKETRFLQCSRRQWGRHDCSHREDVSIACYPGGEGHRLSLGFPVRLMDGENKKEGRVEVFINGQWGTICDDGWTDKDAAVICRQLGYKGPARARTMAYFGEGKGPIHVDNVKCTGNERSLADCIKQDIGRHNCRHSEDAGVICDYFGKKASGNSNKESLSSVCGLRLLHRRQKRIIGGKNSLRGGWPWQVSLRLKSSHGDGRLLCGATLLSSCWVLTAAHCFKRYGNSTRNYAVRVGDYHTLVPEEFEEEIGVQQIVIHREYRPDSSDYDIALVRLQGPEEQCARFSSHVLPACLPLWRERPQKTASNCYITGWGDTGRAYSRTLQQAAIPLLPKRFCEERYKGRFTGRMLCAGNLHEHKRVDSCQGDSGGPLMCERPGESWVVYGVTSWGHGCGVKDSPGVYTKVSAFVPWIKSVTKL</sequence>
<comment type="function">
    <text evidence="1">Plays a role in neuronal plasticity and the proteolytic action may subserve structural reorganizations associated with learning and memory operations.</text>
</comment>
<comment type="subcellular location">
    <subcellularLocation>
        <location>Secreted</location>
    </subcellularLocation>
</comment>
<comment type="similarity">
    <text evidence="5">Belongs to the peptidase S1 family.</text>
</comment>
<gene>
    <name type="primary">PRSS12</name>
</gene>
<proteinExistence type="inferred from homology"/>